<reference key="1">
    <citation type="journal article" date="2002" name="Nat. Biotechnol.">
        <title>Genome sequence of the dissimilatory metal ion-reducing bacterium Shewanella oneidensis.</title>
        <authorList>
            <person name="Heidelberg J.F."/>
            <person name="Paulsen I.T."/>
            <person name="Nelson K.E."/>
            <person name="Gaidos E.J."/>
            <person name="Nelson W.C."/>
            <person name="Read T.D."/>
            <person name="Eisen J.A."/>
            <person name="Seshadri R."/>
            <person name="Ward N.L."/>
            <person name="Methe B.A."/>
            <person name="Clayton R.A."/>
            <person name="Meyer T."/>
            <person name="Tsapin A."/>
            <person name="Scott J."/>
            <person name="Beanan M.J."/>
            <person name="Brinkac L.M."/>
            <person name="Daugherty S.C."/>
            <person name="DeBoy R.T."/>
            <person name="Dodson R.J."/>
            <person name="Durkin A.S."/>
            <person name="Haft D.H."/>
            <person name="Kolonay J.F."/>
            <person name="Madupu R."/>
            <person name="Peterson J.D."/>
            <person name="Umayam L.A."/>
            <person name="White O."/>
            <person name="Wolf A.M."/>
            <person name="Vamathevan J.J."/>
            <person name="Weidman J.F."/>
            <person name="Impraim M."/>
            <person name="Lee K."/>
            <person name="Berry K.J."/>
            <person name="Lee C."/>
            <person name="Mueller J."/>
            <person name="Khouri H.M."/>
            <person name="Gill J."/>
            <person name="Utterback T.R."/>
            <person name="McDonald L.A."/>
            <person name="Feldblyum T.V."/>
            <person name="Smith H.O."/>
            <person name="Venter J.C."/>
            <person name="Nealson K.H."/>
            <person name="Fraser C.M."/>
        </authorList>
    </citation>
    <scope>NUCLEOTIDE SEQUENCE [LARGE SCALE GENOMIC DNA]</scope>
    <source>
        <strain>ATCC 700550 / JCM 31522 / CIP 106686 / LMG 19005 / NCIMB 14063 / MR-1</strain>
    </source>
</reference>
<protein>
    <recommendedName>
        <fullName evidence="1">NADH-quinone oxidoreductase subunit C/D</fullName>
        <ecNumber evidence="1">7.1.1.-</ecNumber>
    </recommendedName>
    <alternativeName>
        <fullName evidence="1">NADH dehydrogenase I subunit C/D</fullName>
    </alternativeName>
    <alternativeName>
        <fullName evidence="1">NDH-1 subunit C/D</fullName>
    </alternativeName>
</protein>
<feature type="chain" id="PRO_0000358693" description="NADH-quinone oxidoreductase subunit C/D">
    <location>
        <begin position="1"/>
        <end position="601"/>
    </location>
</feature>
<feature type="region of interest" description="NADH dehydrogenase I subunit C" evidence="1">
    <location>
        <begin position="1"/>
        <end position="191"/>
    </location>
</feature>
<feature type="region of interest" description="NADH dehydrogenase I subunit D" evidence="1">
    <location>
        <begin position="215"/>
        <end position="601"/>
    </location>
</feature>
<accession>Q8EI31</accession>
<evidence type="ECO:0000255" key="1">
    <source>
        <dbReference type="HAMAP-Rule" id="MF_01359"/>
    </source>
</evidence>
<dbReference type="EC" id="7.1.1.-" evidence="1"/>
<dbReference type="EMBL" id="AE014299">
    <property type="protein sequence ID" value="AAN54092.1"/>
    <property type="molecule type" value="Genomic_DNA"/>
</dbReference>
<dbReference type="RefSeq" id="NP_716647.1">
    <property type="nucleotide sequence ID" value="NC_004347.2"/>
</dbReference>
<dbReference type="SMR" id="Q8EI31"/>
<dbReference type="STRING" id="211586.SO_1019"/>
<dbReference type="PaxDb" id="211586-SO_1019"/>
<dbReference type="KEGG" id="son:SO_1019"/>
<dbReference type="PATRIC" id="fig|211586.12.peg.975"/>
<dbReference type="eggNOG" id="COG0649">
    <property type="taxonomic scope" value="Bacteria"/>
</dbReference>
<dbReference type="eggNOG" id="COG0852">
    <property type="taxonomic scope" value="Bacteria"/>
</dbReference>
<dbReference type="HOGENOM" id="CLU_015134_3_2_6"/>
<dbReference type="OrthoDB" id="9801496at2"/>
<dbReference type="PhylomeDB" id="Q8EI31"/>
<dbReference type="BioCyc" id="SONE211586:G1GMP-945-MONOMER"/>
<dbReference type="Proteomes" id="UP000008186">
    <property type="component" value="Chromosome"/>
</dbReference>
<dbReference type="GO" id="GO:0030964">
    <property type="term" value="C:NADH dehydrogenase complex"/>
    <property type="evidence" value="ECO:0007669"/>
    <property type="project" value="InterPro"/>
</dbReference>
<dbReference type="GO" id="GO:0005886">
    <property type="term" value="C:plasma membrane"/>
    <property type="evidence" value="ECO:0000318"/>
    <property type="project" value="GO_Central"/>
</dbReference>
<dbReference type="GO" id="GO:0051287">
    <property type="term" value="F:NAD binding"/>
    <property type="evidence" value="ECO:0007669"/>
    <property type="project" value="InterPro"/>
</dbReference>
<dbReference type="GO" id="GO:0008137">
    <property type="term" value="F:NADH dehydrogenase (ubiquinone) activity"/>
    <property type="evidence" value="ECO:0007669"/>
    <property type="project" value="InterPro"/>
</dbReference>
<dbReference type="GO" id="GO:0050136">
    <property type="term" value="F:NADH:ubiquinone reductase (non-electrogenic) activity"/>
    <property type="evidence" value="ECO:0007669"/>
    <property type="project" value="UniProtKB-UniRule"/>
</dbReference>
<dbReference type="GO" id="GO:0048038">
    <property type="term" value="F:quinone binding"/>
    <property type="evidence" value="ECO:0007669"/>
    <property type="project" value="UniProtKB-KW"/>
</dbReference>
<dbReference type="FunFam" id="1.10.645.10:FF:000001">
    <property type="entry name" value="NADH-quinone oxidoreductase subunit C/D"/>
    <property type="match status" value="1"/>
</dbReference>
<dbReference type="FunFam" id="3.30.460.80:FF:000001">
    <property type="entry name" value="NADH-quinone oxidoreductase subunit C/D"/>
    <property type="match status" value="1"/>
</dbReference>
<dbReference type="Gene3D" id="1.10.645.10">
    <property type="entry name" value="Cytochrome-c3 Hydrogenase, chain B"/>
    <property type="match status" value="1"/>
</dbReference>
<dbReference type="Gene3D" id="3.30.460.80">
    <property type="entry name" value="NADH:ubiquinone oxidoreductase, 30kDa subunit"/>
    <property type="match status" value="1"/>
</dbReference>
<dbReference type="HAMAP" id="MF_01359">
    <property type="entry name" value="NDH1_NuoCD_1"/>
    <property type="match status" value="1"/>
</dbReference>
<dbReference type="HAMAP" id="MF_01358">
    <property type="entry name" value="NDH1_NuoD"/>
    <property type="match status" value="1"/>
</dbReference>
<dbReference type="InterPro" id="IPR010218">
    <property type="entry name" value="NADH_DH_suC"/>
</dbReference>
<dbReference type="InterPro" id="IPR023062">
    <property type="entry name" value="NADH_DH_suCD"/>
</dbReference>
<dbReference type="InterPro" id="IPR001135">
    <property type="entry name" value="NADH_Q_OxRdtase_suD"/>
</dbReference>
<dbReference type="InterPro" id="IPR037232">
    <property type="entry name" value="NADH_quin_OxRdtase_su_C/D-like"/>
</dbReference>
<dbReference type="InterPro" id="IPR001268">
    <property type="entry name" value="NADH_UbQ_OxRdtase_30kDa_su"/>
</dbReference>
<dbReference type="InterPro" id="IPR014029">
    <property type="entry name" value="NADH_UbQ_OxRdtase_49kDa_CS"/>
</dbReference>
<dbReference type="InterPro" id="IPR022885">
    <property type="entry name" value="NDH1_su_D/H"/>
</dbReference>
<dbReference type="InterPro" id="IPR029014">
    <property type="entry name" value="NiFe-Hase_large"/>
</dbReference>
<dbReference type="NCBIfam" id="TIGR01961">
    <property type="entry name" value="NuoC_fam"/>
    <property type="match status" value="1"/>
</dbReference>
<dbReference type="NCBIfam" id="TIGR01962">
    <property type="entry name" value="NuoD"/>
    <property type="match status" value="1"/>
</dbReference>
<dbReference type="NCBIfam" id="NF004739">
    <property type="entry name" value="PRK06075.1"/>
    <property type="match status" value="1"/>
</dbReference>
<dbReference type="NCBIfam" id="NF008728">
    <property type="entry name" value="PRK11742.1"/>
    <property type="match status" value="1"/>
</dbReference>
<dbReference type="PANTHER" id="PTHR11993:SF45">
    <property type="entry name" value="NADH-QUINONE OXIDOREDUCTASE SUBUNIT C_D"/>
    <property type="match status" value="1"/>
</dbReference>
<dbReference type="PANTHER" id="PTHR11993">
    <property type="entry name" value="NADH-UBIQUINONE OXIDOREDUCTASE 49 KDA SUBUNIT"/>
    <property type="match status" value="1"/>
</dbReference>
<dbReference type="Pfam" id="PF00329">
    <property type="entry name" value="Complex1_30kDa"/>
    <property type="match status" value="1"/>
</dbReference>
<dbReference type="Pfam" id="PF00346">
    <property type="entry name" value="Complex1_49kDa"/>
    <property type="match status" value="1"/>
</dbReference>
<dbReference type="SUPFAM" id="SSF56762">
    <property type="entry name" value="HydB/Nqo4-like"/>
    <property type="match status" value="1"/>
</dbReference>
<dbReference type="SUPFAM" id="SSF143243">
    <property type="entry name" value="Nqo5-like"/>
    <property type="match status" value="1"/>
</dbReference>
<dbReference type="PROSITE" id="PS00535">
    <property type="entry name" value="COMPLEX1_49K"/>
    <property type="match status" value="1"/>
</dbReference>
<name>NUOCD_SHEON</name>
<sequence>MKLTRDFPHNDTMAQWQPSDHKDAKVVGELFAHFGAEHFTVQTTRTGVPVVWLPRELLQDVVGFLRKLPAPFVMLYDLSATDERLRSHRDGLPQSDFTVFYHLISIDRNADVMLKVALAESDLHLPTITNHFPNANWYEREVWDLMGITFDGHPHLTRIMMPKSWQGHPLRKDYPARATEFDPFMLDAAKQDMEQENLLFKPEEWGLARGNENEDYMFLNLGPNHPSAHGAFRLVLQLDGEEVRNCVPDIGYHHRGAEKMGERQSWHSYIPYTDRVEYLGGVMNNLPYVLAVEKLAGIKVPQRVDMIRVMMAELFRIQSHLLFLGTYIQDVGAMTPVFFTFTDRQHIYTIIEAITGARMHPAWFRIGGVAHDLPKGWQRLVQDNLLSWLPKRLMDYEKAAMRNSILRGRTIGVAAYTTEQALAWGTTGAGLRATGLNFDVRKWRPYSGYEQFDFEVPVGSNGDAYDRATVRIEEIRQSMRIIEQCMNNMPEGPFKADHPLTTPPPKERTLQHIETLINHFLQVSWGPVMPAAESFQMIEATKGINSYYLTSDGSTMSYRTRIRTPSFAHLQQIPSVIKGSMVSDLIVYLGSIDFVMSDVDR</sequence>
<organism>
    <name type="scientific">Shewanella oneidensis (strain ATCC 700550 / JCM 31522 / CIP 106686 / LMG 19005 / NCIMB 14063 / MR-1)</name>
    <dbReference type="NCBI Taxonomy" id="211586"/>
    <lineage>
        <taxon>Bacteria</taxon>
        <taxon>Pseudomonadati</taxon>
        <taxon>Pseudomonadota</taxon>
        <taxon>Gammaproteobacteria</taxon>
        <taxon>Alteromonadales</taxon>
        <taxon>Shewanellaceae</taxon>
        <taxon>Shewanella</taxon>
    </lineage>
</organism>
<keyword id="KW-0997">Cell inner membrane</keyword>
<keyword id="KW-1003">Cell membrane</keyword>
<keyword id="KW-0472">Membrane</keyword>
<keyword id="KW-0511">Multifunctional enzyme</keyword>
<keyword id="KW-0520">NAD</keyword>
<keyword id="KW-0874">Quinone</keyword>
<keyword id="KW-1185">Reference proteome</keyword>
<keyword id="KW-1278">Translocase</keyword>
<keyword id="KW-0813">Transport</keyword>
<keyword id="KW-0830">Ubiquinone</keyword>
<proteinExistence type="inferred from homology"/>
<gene>
    <name evidence="1" type="primary">nuoC</name>
    <name evidence="1" type="synonym">nuoCD</name>
    <name evidence="1" type="synonym">nuoD</name>
    <name type="ordered locus">SO_1019</name>
</gene>
<comment type="function">
    <text evidence="1">NDH-1 shuttles electrons from NADH, via FMN and iron-sulfur (Fe-S) centers, to quinones in the respiratory chain. The immediate electron acceptor for the enzyme in this species is believed to be ubiquinone. Couples the redox reaction to proton translocation (for every two electrons transferred, four hydrogen ions are translocated across the cytoplasmic membrane), and thus conserves the redox energy in a proton gradient.</text>
</comment>
<comment type="catalytic activity">
    <reaction evidence="1">
        <text>a quinone + NADH + 5 H(+)(in) = a quinol + NAD(+) + 4 H(+)(out)</text>
        <dbReference type="Rhea" id="RHEA:57888"/>
        <dbReference type="ChEBI" id="CHEBI:15378"/>
        <dbReference type="ChEBI" id="CHEBI:24646"/>
        <dbReference type="ChEBI" id="CHEBI:57540"/>
        <dbReference type="ChEBI" id="CHEBI:57945"/>
        <dbReference type="ChEBI" id="CHEBI:132124"/>
    </reaction>
</comment>
<comment type="subunit">
    <text evidence="1">NDH-1 is composed of 13 different subunits. Subunits NuoB, CD, E, F, and G constitute the peripheral sector of the complex.</text>
</comment>
<comment type="subcellular location">
    <subcellularLocation>
        <location evidence="1">Cell inner membrane</location>
        <topology evidence="1">Peripheral membrane protein</topology>
        <orientation evidence="1">Cytoplasmic side</orientation>
    </subcellularLocation>
</comment>
<comment type="similarity">
    <text evidence="1">In the N-terminal section; belongs to the complex I 30 kDa subunit family.</text>
</comment>
<comment type="similarity">
    <text evidence="1">In the C-terminal section; belongs to the complex I 49 kDa subunit family.</text>
</comment>